<evidence type="ECO:0000255" key="1">
    <source>
        <dbReference type="HAMAP-Rule" id="MF_00847"/>
    </source>
</evidence>
<evidence type="ECO:0000269" key="2">
    <source>
    </source>
</evidence>
<evidence type="ECO:0000269" key="3">
    <source>
    </source>
</evidence>
<evidence type="ECO:0000305" key="4"/>
<evidence type="ECO:0007829" key="5">
    <source>
        <dbReference type="PDB" id="7MU0"/>
    </source>
</evidence>
<reference key="1">
    <citation type="journal article" date="1998" name="Nature">
        <title>Deciphering the biology of Mycobacterium tuberculosis from the complete genome sequence.</title>
        <authorList>
            <person name="Cole S.T."/>
            <person name="Brosch R."/>
            <person name="Parkhill J."/>
            <person name="Garnier T."/>
            <person name="Churcher C.M."/>
            <person name="Harris D.E."/>
            <person name="Gordon S.V."/>
            <person name="Eiglmeier K."/>
            <person name="Gas S."/>
            <person name="Barry C.E. III"/>
            <person name="Tekaia F."/>
            <person name="Badcock K."/>
            <person name="Basham D."/>
            <person name="Brown D."/>
            <person name="Chillingworth T."/>
            <person name="Connor R."/>
            <person name="Davies R.M."/>
            <person name="Devlin K."/>
            <person name="Feltwell T."/>
            <person name="Gentles S."/>
            <person name="Hamlin N."/>
            <person name="Holroyd S."/>
            <person name="Hornsby T."/>
            <person name="Jagels K."/>
            <person name="Krogh A."/>
            <person name="McLean J."/>
            <person name="Moule S."/>
            <person name="Murphy L.D."/>
            <person name="Oliver S."/>
            <person name="Osborne J."/>
            <person name="Quail M.A."/>
            <person name="Rajandream M.A."/>
            <person name="Rogers J."/>
            <person name="Rutter S."/>
            <person name="Seeger K."/>
            <person name="Skelton S."/>
            <person name="Squares S."/>
            <person name="Squares R."/>
            <person name="Sulston J.E."/>
            <person name="Taylor K."/>
            <person name="Whitehead S."/>
            <person name="Barrell B.G."/>
        </authorList>
    </citation>
    <scope>NUCLEOTIDE SEQUENCE [LARGE SCALE GENOMIC DNA]</scope>
    <source>
        <strain>ATCC 25618 / H37Rv</strain>
    </source>
</reference>
<reference key="2">
    <citation type="journal article" date="2010" name="Microb. Drug Resist.">
        <title>Microarray analysis of efflux pump genes in multidrug-resistant Mycobacterium tuberculosis during stress induced by common anti-tuberculous drugs.</title>
        <authorList>
            <person name="Gupta A.K."/>
            <person name="Katoch V.M."/>
            <person name="Chauhan D.S."/>
            <person name="Sharma R."/>
            <person name="Singh M."/>
            <person name="Venkatesan K."/>
            <person name="Sharma V.D."/>
        </authorList>
    </citation>
    <scope>INDUCTION</scope>
</reference>
<reference key="3">
    <citation type="journal article" date="2010" name="PLoS ONE">
        <title>Prokaryotic ubiquitin-like protein (Pup) proteome of Mycobacterium tuberculosis.</title>
        <authorList>
            <person name="Festa R.A."/>
            <person name="McAllister F."/>
            <person name="Pearce M.J."/>
            <person name="Mintseris J."/>
            <person name="Burns K.E."/>
            <person name="Gygi S.P."/>
            <person name="Darwin K.H."/>
        </authorList>
    </citation>
    <scope>PUPYLATION AT LYS-338</scope>
    <scope>IDENTIFICATION BY MASS SPECTROMETRY</scope>
    <source>
        <strain>ATCC 25618 / H37Rv</strain>
    </source>
</reference>
<reference key="4">
    <citation type="journal article" date="2011" name="Mol. Cell. Proteomics">
        <title>Proteogenomic analysis of Mycobacterium tuberculosis by high resolution mass spectrometry.</title>
        <authorList>
            <person name="Kelkar D.S."/>
            <person name="Kumar D."/>
            <person name="Kumar P."/>
            <person name="Balakrishnan L."/>
            <person name="Muthusamy B."/>
            <person name="Yadav A.K."/>
            <person name="Shrivastava P."/>
            <person name="Marimuthu A."/>
            <person name="Anand S."/>
            <person name="Sundaram H."/>
            <person name="Kingsbury R."/>
            <person name="Harsha H.C."/>
            <person name="Nair B."/>
            <person name="Prasad T.S."/>
            <person name="Chauhan D.S."/>
            <person name="Katoch K."/>
            <person name="Katoch V.M."/>
            <person name="Kumar P."/>
            <person name="Chaerkady R."/>
            <person name="Ramachandran S."/>
            <person name="Dash D."/>
            <person name="Pandey A."/>
        </authorList>
    </citation>
    <scope>IDENTIFICATION BY MASS SPECTROMETRY [LARGE SCALE ANALYSIS]</scope>
    <source>
        <strain>ATCC 25618 / H37Rv</strain>
    </source>
</reference>
<dbReference type="EC" id="3.6.1.-" evidence="1"/>
<dbReference type="EMBL" id="AL123456">
    <property type="protein sequence ID" value="CCP45271.1"/>
    <property type="molecule type" value="Genomic_DNA"/>
</dbReference>
<dbReference type="PIR" id="D70867">
    <property type="entry name" value="D70867"/>
</dbReference>
<dbReference type="RefSeq" id="NP_216993.1">
    <property type="nucleotide sequence ID" value="NC_000962.3"/>
</dbReference>
<dbReference type="RefSeq" id="WP_003412708.1">
    <property type="nucleotide sequence ID" value="NZ_NVQJ01000024.1"/>
</dbReference>
<dbReference type="PDB" id="7MSC">
    <property type="method" value="EM"/>
    <property type="resolution" value="2.97 A"/>
    <property type="chains" value="x=1-558"/>
</dbReference>
<dbReference type="PDB" id="7MSH">
    <property type="method" value="EM"/>
    <property type="resolution" value="3.23 A"/>
    <property type="chains" value="x=1-558"/>
</dbReference>
<dbReference type="PDB" id="7MSM">
    <property type="method" value="EM"/>
    <property type="resolution" value="2.79 A"/>
    <property type="chains" value="x=1-558"/>
</dbReference>
<dbReference type="PDB" id="7MSZ">
    <property type="method" value="EM"/>
    <property type="resolution" value="3.10 A"/>
    <property type="chains" value="x=1-558"/>
</dbReference>
<dbReference type="PDB" id="7MU0">
    <property type="method" value="X-ray"/>
    <property type="resolution" value="2.90 A"/>
    <property type="chains" value="A/B=1-558"/>
</dbReference>
<dbReference type="PDBsum" id="7MSC"/>
<dbReference type="PDBsum" id="7MSH"/>
<dbReference type="PDBsum" id="7MSM"/>
<dbReference type="PDBsum" id="7MSZ"/>
<dbReference type="PDBsum" id="7MU0"/>
<dbReference type="EMDB" id="EMD-23961"/>
<dbReference type="EMDB" id="EMD-23962"/>
<dbReference type="EMDB" id="EMD-23969"/>
<dbReference type="EMDB" id="EMD-23972"/>
<dbReference type="SMR" id="P9WQK3"/>
<dbReference type="FunCoup" id="P9WQK3">
    <property type="interactions" value="397"/>
</dbReference>
<dbReference type="STRING" id="83332.Rv2477c"/>
<dbReference type="TCDB" id="3.A.1.120.8">
    <property type="family name" value="the atp-binding cassette (abc) superfamily"/>
</dbReference>
<dbReference type="PaxDb" id="83332-Rv2477c"/>
<dbReference type="DNASU" id="887757"/>
<dbReference type="GeneID" id="45426470"/>
<dbReference type="GeneID" id="887757"/>
<dbReference type="KEGG" id="mtu:Rv2477c"/>
<dbReference type="KEGG" id="mtv:RVBD_2477c"/>
<dbReference type="TubercuList" id="Rv2477c"/>
<dbReference type="eggNOG" id="COG0488">
    <property type="taxonomic scope" value="Bacteria"/>
</dbReference>
<dbReference type="InParanoid" id="P9WQK3"/>
<dbReference type="OrthoDB" id="3239744at2"/>
<dbReference type="PhylomeDB" id="P9WQK3"/>
<dbReference type="Proteomes" id="UP000001584">
    <property type="component" value="Chromosome"/>
</dbReference>
<dbReference type="GO" id="GO:0005829">
    <property type="term" value="C:cytosol"/>
    <property type="evidence" value="ECO:0007005"/>
    <property type="project" value="MTBBASE"/>
</dbReference>
<dbReference type="GO" id="GO:0009274">
    <property type="term" value="C:peptidoglycan-based cell wall"/>
    <property type="evidence" value="ECO:0007005"/>
    <property type="project" value="MTBBASE"/>
</dbReference>
<dbReference type="GO" id="GO:0005886">
    <property type="term" value="C:plasma membrane"/>
    <property type="evidence" value="ECO:0007005"/>
    <property type="project" value="MTBBASE"/>
</dbReference>
<dbReference type="GO" id="GO:0005524">
    <property type="term" value="F:ATP binding"/>
    <property type="evidence" value="ECO:0007669"/>
    <property type="project" value="UniProtKB-UniRule"/>
</dbReference>
<dbReference type="GO" id="GO:0016887">
    <property type="term" value="F:ATP hydrolysis activity"/>
    <property type="evidence" value="ECO:0007669"/>
    <property type="project" value="UniProtKB-UniRule"/>
</dbReference>
<dbReference type="GO" id="GO:0043022">
    <property type="term" value="F:ribosome binding"/>
    <property type="evidence" value="ECO:0007669"/>
    <property type="project" value="UniProtKB-UniRule"/>
</dbReference>
<dbReference type="GO" id="GO:0019843">
    <property type="term" value="F:rRNA binding"/>
    <property type="evidence" value="ECO:0007669"/>
    <property type="project" value="UniProtKB-UniRule"/>
</dbReference>
<dbReference type="GO" id="GO:0000049">
    <property type="term" value="F:tRNA binding"/>
    <property type="evidence" value="ECO:0007669"/>
    <property type="project" value="UniProtKB-UniRule"/>
</dbReference>
<dbReference type="GO" id="GO:0045900">
    <property type="term" value="P:negative regulation of translational elongation"/>
    <property type="evidence" value="ECO:0007669"/>
    <property type="project" value="UniProtKB-UniRule"/>
</dbReference>
<dbReference type="GO" id="GO:0006412">
    <property type="term" value="P:translation"/>
    <property type="evidence" value="ECO:0007669"/>
    <property type="project" value="UniProtKB-KW"/>
</dbReference>
<dbReference type="CDD" id="cd03221">
    <property type="entry name" value="ABCF_EF-3"/>
    <property type="match status" value="2"/>
</dbReference>
<dbReference type="FunFam" id="3.40.50.300:FF:000183">
    <property type="entry name" value="ABC transporter ATP-binding protein yjjK"/>
    <property type="match status" value="1"/>
</dbReference>
<dbReference type="FunFam" id="3.40.50.300:FF:000011">
    <property type="entry name" value="Putative ABC transporter ATP-binding component"/>
    <property type="match status" value="1"/>
</dbReference>
<dbReference type="Gene3D" id="3.40.50.300">
    <property type="entry name" value="P-loop containing nucleotide triphosphate hydrolases"/>
    <property type="match status" value="2"/>
</dbReference>
<dbReference type="HAMAP" id="MF_00847">
    <property type="entry name" value="EttA"/>
    <property type="match status" value="1"/>
</dbReference>
<dbReference type="InterPro" id="IPR003593">
    <property type="entry name" value="AAA+_ATPase"/>
</dbReference>
<dbReference type="InterPro" id="IPR032781">
    <property type="entry name" value="ABC_tran_Xtn"/>
</dbReference>
<dbReference type="InterPro" id="IPR003439">
    <property type="entry name" value="ABC_transporter-like_ATP-bd"/>
</dbReference>
<dbReference type="InterPro" id="IPR017871">
    <property type="entry name" value="ABC_transporter-like_CS"/>
</dbReference>
<dbReference type="InterPro" id="IPR022374">
    <property type="entry name" value="EttA"/>
</dbReference>
<dbReference type="InterPro" id="IPR027417">
    <property type="entry name" value="P-loop_NTPase"/>
</dbReference>
<dbReference type="NCBIfam" id="TIGR03719">
    <property type="entry name" value="ABC_ABC_ChvD"/>
    <property type="match status" value="1"/>
</dbReference>
<dbReference type="NCBIfam" id="NF008775">
    <property type="entry name" value="PRK11819.1"/>
    <property type="match status" value="1"/>
</dbReference>
<dbReference type="PANTHER" id="PTHR43858:SF1">
    <property type="entry name" value="ABC TRANSPORTER-RELATED PROTEIN"/>
    <property type="match status" value="1"/>
</dbReference>
<dbReference type="PANTHER" id="PTHR43858">
    <property type="entry name" value="ENERGY-DEPENDENT TRANSLATIONAL THROTTLE PROTEIN ETTA"/>
    <property type="match status" value="1"/>
</dbReference>
<dbReference type="Pfam" id="PF00005">
    <property type="entry name" value="ABC_tran"/>
    <property type="match status" value="2"/>
</dbReference>
<dbReference type="Pfam" id="PF12848">
    <property type="entry name" value="ABC_tran_Xtn"/>
    <property type="match status" value="1"/>
</dbReference>
<dbReference type="SMART" id="SM00382">
    <property type="entry name" value="AAA"/>
    <property type="match status" value="2"/>
</dbReference>
<dbReference type="SUPFAM" id="SSF52540">
    <property type="entry name" value="P-loop containing nucleoside triphosphate hydrolases"/>
    <property type="match status" value="2"/>
</dbReference>
<dbReference type="PROSITE" id="PS00211">
    <property type="entry name" value="ABC_TRANSPORTER_1"/>
    <property type="match status" value="2"/>
</dbReference>
<dbReference type="PROSITE" id="PS50893">
    <property type="entry name" value="ABC_TRANSPORTER_2"/>
    <property type="match status" value="2"/>
</dbReference>
<organism>
    <name type="scientific">Mycobacterium tuberculosis (strain ATCC 25618 / H37Rv)</name>
    <dbReference type="NCBI Taxonomy" id="83332"/>
    <lineage>
        <taxon>Bacteria</taxon>
        <taxon>Bacillati</taxon>
        <taxon>Actinomycetota</taxon>
        <taxon>Actinomycetes</taxon>
        <taxon>Mycobacteriales</taxon>
        <taxon>Mycobacteriaceae</taxon>
        <taxon>Mycobacterium</taxon>
        <taxon>Mycobacterium tuberculosis complex</taxon>
    </lineage>
</organism>
<accession>P9WQK3</accession>
<accession>L0T9X4</accession>
<accession>O53204</accession>
<accession>Q7D727</accession>
<protein>
    <recommendedName>
        <fullName evidence="1">Energy-dependent translational throttle protein EttA</fullName>
        <ecNumber evidence="1">3.6.1.-</ecNumber>
    </recommendedName>
    <alternativeName>
        <fullName evidence="1">Translational regulatory factor EttA</fullName>
    </alternativeName>
</protein>
<sequence length="558" mass="61893">MAEFIYTMKKVRKAHGDKVILDDVTLSFYPGAKIGVVGPNGAGKSSVLRIMAGLDKPNNGDAFLATGATVGILQQEPPLNEDKTVRGNVEEGMGDIKIKLDRFNEVAELMATDYTDELMEEMGRLQEELDHADAWDLDAQLEQAMDALRCPPADEPVTNLSGGERRRVALCKLLLSKPDLLLLDEPTNHLDAESVQWLEQHLASYPGAILAVTHDRYFLDNVAEWILELDRGRAYPYEGNYSTYLEKKAERLAVQGRKDAKLQKRLTEELAWVRSGAKARQAKSKARLQRYEEMAAEAEKTRKLDFEEIQIPVGPRLGNVVVEVDHLDKGYDGRALIKDLSFSLPRNGIVGVIGPNGVGKTTLFKTIVGLETPDSGSVKVGETVKLSYVDQARAGIDPRKTVWEVVSDGLDYIQVGQTEVPSRAYVSAFGFKGPDQQKPAGVLSGGERNRLNLALTLKQGGNLILLDEPTNDLDVETLGSLENALLNFPGCAVVISHDRWFLDRTCTHILAWEGDDDNEAKWFWFEGNFGAYEENKVERLGVDAARPHRVTHRKLTRG</sequence>
<name>ETTA_MYCTU</name>
<gene>
    <name evidence="1" type="primary">ettA</name>
    <name type="ordered locus">Rv2477c</name>
</gene>
<feature type="chain" id="PRO_0000395861" description="Energy-dependent translational throttle protein EttA">
    <location>
        <begin position="1"/>
        <end position="558"/>
    </location>
</feature>
<feature type="domain" description="ABC transporter 1" evidence="1">
    <location>
        <begin position="6"/>
        <end position="256"/>
    </location>
</feature>
<feature type="domain" description="ABC transporter 2" evidence="1">
    <location>
        <begin position="322"/>
        <end position="552"/>
    </location>
</feature>
<feature type="region of interest" description="Arm" evidence="1">
    <location>
        <begin position="94"/>
        <end position="136"/>
    </location>
</feature>
<feature type="region of interest" description="PtIM" evidence="1">
    <location>
        <begin position="239"/>
        <end position="320"/>
    </location>
</feature>
<feature type="binding site" evidence="1">
    <location>
        <begin position="38"/>
        <end position="45"/>
    </location>
    <ligand>
        <name>ATP</name>
        <dbReference type="ChEBI" id="CHEBI:30616"/>
        <label>1</label>
    </ligand>
</feature>
<feature type="binding site" evidence="1">
    <location>
        <begin position="354"/>
        <end position="361"/>
    </location>
    <ligand>
        <name>ATP</name>
        <dbReference type="ChEBI" id="CHEBI:30616"/>
        <label>2</label>
    </ligand>
</feature>
<feature type="cross-link" description="Isoglutamyl lysine isopeptide (Lys-Gln) (interchain with Q-Cter in protein Pup)" evidence="3">
    <location>
        <position position="338"/>
    </location>
</feature>
<feature type="strand" evidence="5">
    <location>
        <begin position="5"/>
        <end position="15"/>
    </location>
</feature>
<feature type="strand" evidence="5">
    <location>
        <begin position="18"/>
        <end position="28"/>
    </location>
</feature>
<feature type="strand" evidence="5">
    <location>
        <begin position="33"/>
        <end position="37"/>
    </location>
</feature>
<feature type="helix" evidence="5">
    <location>
        <begin position="44"/>
        <end position="51"/>
    </location>
</feature>
<feature type="strand" evidence="5">
    <location>
        <begin position="58"/>
        <end position="64"/>
    </location>
</feature>
<feature type="strand" evidence="5">
    <location>
        <begin position="70"/>
        <end position="73"/>
    </location>
</feature>
<feature type="helix" evidence="5">
    <location>
        <begin position="85"/>
        <end position="93"/>
    </location>
</feature>
<feature type="helix" evidence="5">
    <location>
        <begin position="95"/>
        <end position="109"/>
    </location>
</feature>
<feature type="turn" evidence="5">
    <location>
        <begin position="110"/>
        <end position="112"/>
    </location>
</feature>
<feature type="helix" evidence="5">
    <location>
        <begin position="116"/>
        <end position="131"/>
    </location>
</feature>
<feature type="helix" evidence="5">
    <location>
        <begin position="137"/>
        <end position="147"/>
    </location>
</feature>
<feature type="helix" evidence="5">
    <location>
        <begin position="162"/>
        <end position="176"/>
    </location>
</feature>
<feature type="strand" evidence="5">
    <location>
        <begin position="179"/>
        <end position="185"/>
    </location>
</feature>
<feature type="turn" evidence="5">
    <location>
        <begin position="186"/>
        <end position="189"/>
    </location>
</feature>
<feature type="helix" evidence="5">
    <location>
        <begin position="192"/>
        <end position="203"/>
    </location>
</feature>
<feature type="strand" evidence="5">
    <location>
        <begin position="207"/>
        <end position="212"/>
    </location>
</feature>
<feature type="helix" evidence="5">
    <location>
        <begin position="216"/>
        <end position="221"/>
    </location>
</feature>
<feature type="strand" evidence="5">
    <location>
        <begin position="224"/>
        <end position="230"/>
    </location>
</feature>
<feature type="strand" evidence="5">
    <location>
        <begin position="233"/>
        <end position="239"/>
    </location>
</feature>
<feature type="helix" evidence="5">
    <location>
        <begin position="241"/>
        <end position="273"/>
    </location>
</feature>
<feature type="helix" evidence="5">
    <location>
        <begin position="277"/>
        <end position="280"/>
    </location>
</feature>
<feature type="helix" evidence="5">
    <location>
        <begin position="282"/>
        <end position="287"/>
    </location>
</feature>
<feature type="helix" evidence="5">
    <location>
        <begin position="291"/>
        <end position="298"/>
    </location>
</feature>
<feature type="strand" evidence="5">
    <location>
        <begin position="322"/>
        <end position="331"/>
    </location>
</feature>
<feature type="strand" evidence="5">
    <location>
        <begin position="334"/>
        <end position="344"/>
    </location>
</feature>
<feature type="strand" evidence="5">
    <location>
        <begin position="349"/>
        <end position="353"/>
    </location>
</feature>
<feature type="helix" evidence="5">
    <location>
        <begin position="360"/>
        <end position="368"/>
    </location>
</feature>
<feature type="strand" evidence="5">
    <location>
        <begin position="369"/>
        <end position="371"/>
    </location>
</feature>
<feature type="strand" evidence="5">
    <location>
        <begin position="374"/>
        <end position="380"/>
    </location>
</feature>
<feature type="helix" evidence="5">
    <location>
        <begin position="402"/>
        <end position="407"/>
    </location>
</feature>
<feature type="strand" evidence="5">
    <location>
        <begin position="411"/>
        <end position="415"/>
    </location>
</feature>
<feature type="strand" evidence="5">
    <location>
        <begin position="418"/>
        <end position="421"/>
    </location>
</feature>
<feature type="helix" evidence="5">
    <location>
        <begin position="422"/>
        <end position="428"/>
    </location>
</feature>
<feature type="helix" evidence="5">
    <location>
        <begin position="433"/>
        <end position="437"/>
    </location>
</feature>
<feature type="helix" evidence="5">
    <location>
        <begin position="440"/>
        <end position="442"/>
    </location>
</feature>
<feature type="helix" evidence="5">
    <location>
        <begin position="445"/>
        <end position="457"/>
    </location>
</feature>
<feature type="strand" evidence="5">
    <location>
        <begin position="462"/>
        <end position="468"/>
    </location>
</feature>
<feature type="turn" evidence="5">
    <location>
        <begin position="469"/>
        <end position="472"/>
    </location>
</feature>
<feature type="helix" evidence="5">
    <location>
        <begin position="475"/>
        <end position="486"/>
    </location>
</feature>
<feature type="strand" evidence="5">
    <location>
        <begin position="489"/>
        <end position="495"/>
    </location>
</feature>
<feature type="helix" evidence="5">
    <location>
        <begin position="499"/>
        <end position="505"/>
    </location>
</feature>
<feature type="strand" evidence="5">
    <location>
        <begin position="507"/>
        <end position="512"/>
    </location>
</feature>
<feature type="strand" evidence="5">
    <location>
        <begin position="522"/>
        <end position="527"/>
    </location>
</feature>
<feature type="helix" evidence="5">
    <location>
        <begin position="529"/>
        <end position="540"/>
    </location>
</feature>
<feature type="helix" evidence="5">
    <location>
        <begin position="542"/>
        <end position="545"/>
    </location>
</feature>
<proteinExistence type="evidence at protein level"/>
<keyword id="KW-0002">3D-structure</keyword>
<keyword id="KW-0067">ATP-binding</keyword>
<keyword id="KW-0963">Cytoplasm</keyword>
<keyword id="KW-0378">Hydrolase</keyword>
<keyword id="KW-1017">Isopeptide bond</keyword>
<keyword id="KW-0547">Nucleotide-binding</keyword>
<keyword id="KW-0648">Protein biosynthesis</keyword>
<keyword id="KW-1185">Reference proteome</keyword>
<keyword id="KW-0677">Repeat</keyword>
<keyword id="KW-0694">RNA-binding</keyword>
<keyword id="KW-0699">rRNA-binding</keyword>
<keyword id="KW-0810">Translation regulation</keyword>
<keyword id="KW-0820">tRNA-binding</keyword>
<keyword id="KW-0832">Ubl conjugation</keyword>
<comment type="function">
    <text evidence="1">A translation factor that gates the progression of the 70S ribosomal initiation complex (IC, containing tRNA(fMet) in the P-site) into the translation elongation cycle by using a mechanism sensitive to the ATP/ADP ratio. Binds to the 70S ribosome E-site where it modulates the state of the translating ribosome during subunit translocation. ATP hydrolysis probably frees it from the ribosome, which can enter the elongation phase.</text>
</comment>
<comment type="catalytic activity">
    <reaction evidence="1">
        <text>ATP + H2O = ADP + phosphate + H(+)</text>
        <dbReference type="Rhea" id="RHEA:13065"/>
        <dbReference type="ChEBI" id="CHEBI:15377"/>
        <dbReference type="ChEBI" id="CHEBI:15378"/>
        <dbReference type="ChEBI" id="CHEBI:30616"/>
        <dbReference type="ChEBI" id="CHEBI:43474"/>
        <dbReference type="ChEBI" id="CHEBI:456216"/>
    </reaction>
</comment>
<comment type="subunit">
    <text evidence="1">Monomer. Probably contacts ribosomal proteins L1, L5, L33 and S7, the 16S and 23S rRNA and the P-site containing tRNA(fMet).</text>
</comment>
<comment type="subcellular location">
    <subcellularLocation>
        <location evidence="1">Cytoplasm</location>
    </subcellularLocation>
    <text evidence="1">Associates with ribosomes and polysomes.</text>
</comment>
<comment type="induction">
    <text evidence="2">Induced by ofloxacin stress.</text>
</comment>
<comment type="domain">
    <text evidence="1">The arm domain is inserted in the first ABC transporter domain. Probably contacts ribosomal protein L1.</text>
</comment>
<comment type="domain">
    <text evidence="1">The P-site tRNA interaction motif (PtIM domain) probably interacts with the P-site tRNA(fMet) as well as the 23S rRNA.</text>
</comment>
<comment type="similarity">
    <text evidence="1 4">Belongs to the ABC transporter superfamily. ABCF family. Translational throttle EttA subfamily.</text>
</comment>